<gene>
    <name type="primary">Sox15</name>
    <name type="synonym">SOX50E</name>
    <name type="ORF">CG8404</name>
</gene>
<accession>P40657</accession>
<accession>Q1LZ22</accession>
<accession>Q4V734</accession>
<accession>Q9U1J5</accession>
<accession>Q9V6Y8</accession>
<organism>
    <name type="scientific">Drosophila melanogaster</name>
    <name type="common">Fruit fly</name>
    <dbReference type="NCBI Taxonomy" id="7227"/>
    <lineage>
        <taxon>Eukaryota</taxon>
        <taxon>Metazoa</taxon>
        <taxon>Ecdysozoa</taxon>
        <taxon>Arthropoda</taxon>
        <taxon>Hexapoda</taxon>
        <taxon>Insecta</taxon>
        <taxon>Pterygota</taxon>
        <taxon>Neoptera</taxon>
        <taxon>Endopterygota</taxon>
        <taxon>Diptera</taxon>
        <taxon>Brachycera</taxon>
        <taxon>Muscomorpha</taxon>
        <taxon>Ephydroidea</taxon>
        <taxon>Drosophilidae</taxon>
        <taxon>Drosophila</taxon>
        <taxon>Sophophora</taxon>
    </lineage>
</organism>
<feature type="chain" id="PRO_0000048804" description="Putative transcription factor SOX-15">
    <location>
        <begin position="1"/>
        <end position="784"/>
    </location>
</feature>
<feature type="DNA-binding region" description="HMG box" evidence="1">
    <location>
        <begin position="215"/>
        <end position="283"/>
    </location>
</feature>
<feature type="region of interest" description="Disordered" evidence="2">
    <location>
        <begin position="278"/>
        <end position="376"/>
    </location>
</feature>
<feature type="region of interest" description="Disordered" evidence="2">
    <location>
        <begin position="407"/>
        <end position="448"/>
    </location>
</feature>
<feature type="region of interest" description="Disordered" evidence="2">
    <location>
        <begin position="686"/>
        <end position="719"/>
    </location>
</feature>
<feature type="compositionally biased region" description="Basic residues" evidence="2">
    <location>
        <begin position="282"/>
        <end position="293"/>
    </location>
</feature>
<feature type="compositionally biased region" description="Polar residues" evidence="2">
    <location>
        <begin position="306"/>
        <end position="321"/>
    </location>
</feature>
<feature type="compositionally biased region" description="Polar residues" evidence="2">
    <location>
        <begin position="329"/>
        <end position="355"/>
    </location>
</feature>
<feature type="compositionally biased region" description="Polar residues" evidence="2">
    <location>
        <begin position="367"/>
        <end position="376"/>
    </location>
</feature>
<feature type="compositionally biased region" description="Low complexity" evidence="2">
    <location>
        <begin position="409"/>
        <end position="421"/>
    </location>
</feature>
<feature type="compositionally biased region" description="Basic and acidic residues" evidence="2">
    <location>
        <begin position="426"/>
        <end position="439"/>
    </location>
</feature>
<feature type="compositionally biased region" description="Polar residues" evidence="2">
    <location>
        <begin position="688"/>
        <end position="719"/>
    </location>
</feature>
<feature type="sequence conflict" description="In Ref. 1; CAB63944." evidence="3" ref="1">
    <original>H</original>
    <variation>R</variation>
    <location>
        <position position="12"/>
    </location>
</feature>
<feature type="sequence conflict" description="In Ref. 4; AAY51517." evidence="3" ref="4">
    <original>P</original>
    <variation>L</variation>
    <location>
        <position position="320"/>
    </location>
</feature>
<dbReference type="EMBL" id="AJ250955">
    <property type="protein sequence ID" value="CAB63944.1"/>
    <property type="status" value="ALT_FRAME"/>
    <property type="molecule type" value="mRNA"/>
</dbReference>
<dbReference type="EMBL" id="AE013599">
    <property type="protein sequence ID" value="AAF58279.2"/>
    <property type="molecule type" value="Genomic_DNA"/>
</dbReference>
<dbReference type="EMBL" id="BT022122">
    <property type="protein sequence ID" value="AAY51517.1"/>
    <property type="molecule type" value="mRNA"/>
</dbReference>
<dbReference type="EMBL" id="BT025204">
    <property type="protein sequence ID" value="ABF17895.1"/>
    <property type="molecule type" value="mRNA"/>
</dbReference>
<dbReference type="EMBL" id="X65668">
    <property type="protein sequence ID" value="CAA46619.1"/>
    <property type="molecule type" value="mRNA"/>
</dbReference>
<dbReference type="PIR" id="S22936">
    <property type="entry name" value="S22936"/>
</dbReference>
<dbReference type="RefSeq" id="NP_523739.2">
    <property type="nucleotide sequence ID" value="NM_079015.3"/>
</dbReference>
<dbReference type="SMR" id="P40657"/>
<dbReference type="BioGRID" id="62325">
    <property type="interactions" value="7"/>
</dbReference>
<dbReference type="DIP" id="DIP-21090N"/>
<dbReference type="FunCoup" id="P40657">
    <property type="interactions" value="28"/>
</dbReference>
<dbReference type="IntAct" id="P40657">
    <property type="interactions" value="2"/>
</dbReference>
<dbReference type="STRING" id="7227.FBpp0086702"/>
<dbReference type="PaxDb" id="7227-FBpp0086702"/>
<dbReference type="EnsemblMetazoa" id="FBtr0087576">
    <property type="protein sequence ID" value="FBpp0086702"/>
    <property type="gene ID" value="FBgn0005613"/>
</dbReference>
<dbReference type="GeneID" id="36575"/>
<dbReference type="KEGG" id="dme:Dmel_CG8404"/>
<dbReference type="AGR" id="FB:FBgn0005613"/>
<dbReference type="CTD" id="6665"/>
<dbReference type="FlyBase" id="FBgn0005613">
    <property type="gene designation" value="Sox15"/>
</dbReference>
<dbReference type="VEuPathDB" id="VectorBase:FBgn0005613"/>
<dbReference type="eggNOG" id="KOG0527">
    <property type="taxonomic scope" value="Eukaryota"/>
</dbReference>
<dbReference type="GeneTree" id="ENSGT00940000168435"/>
<dbReference type="HOGENOM" id="CLU_017979_0_0_1"/>
<dbReference type="InParanoid" id="P40657"/>
<dbReference type="OMA" id="YDHEHPH"/>
<dbReference type="OrthoDB" id="6247875at2759"/>
<dbReference type="PhylomeDB" id="P40657"/>
<dbReference type="Reactome" id="R-DME-3769402">
    <property type="pathway name" value="Deactivation of the beta-catenin transactivating complex"/>
</dbReference>
<dbReference type="SignaLink" id="P40657"/>
<dbReference type="BioGRID-ORCS" id="36575">
    <property type="hits" value="0 hits in 3 CRISPR screens"/>
</dbReference>
<dbReference type="GenomeRNAi" id="36575"/>
<dbReference type="PRO" id="PR:P40657"/>
<dbReference type="Proteomes" id="UP000000803">
    <property type="component" value="Chromosome 2R"/>
</dbReference>
<dbReference type="Bgee" id="FBgn0005613">
    <property type="expression patterns" value="Expressed in eo support cell (Drosophila) in post-embryonic organism and 33 other cell types or tissues"/>
</dbReference>
<dbReference type="GO" id="GO:0005634">
    <property type="term" value="C:nucleus"/>
    <property type="evidence" value="ECO:0000314"/>
    <property type="project" value="FlyBase"/>
</dbReference>
<dbReference type="GO" id="GO:0001228">
    <property type="term" value="F:DNA-binding transcription activator activity, RNA polymerase II-specific"/>
    <property type="evidence" value="ECO:0000318"/>
    <property type="project" value="GO_Central"/>
</dbReference>
<dbReference type="GO" id="GO:0000978">
    <property type="term" value="F:RNA polymerase II cis-regulatory region sequence-specific DNA binding"/>
    <property type="evidence" value="ECO:0000318"/>
    <property type="project" value="GO_Central"/>
</dbReference>
<dbReference type="GO" id="GO:0030154">
    <property type="term" value="P:cell differentiation"/>
    <property type="evidence" value="ECO:0000318"/>
    <property type="project" value="GO_Central"/>
</dbReference>
<dbReference type="GO" id="GO:0022416">
    <property type="term" value="P:chaeta development"/>
    <property type="evidence" value="ECO:0000315"/>
    <property type="project" value="FlyBase"/>
</dbReference>
<dbReference type="GO" id="GO:0043066">
    <property type="term" value="P:negative regulation of apoptotic process"/>
    <property type="evidence" value="ECO:0000315"/>
    <property type="project" value="FlyBase"/>
</dbReference>
<dbReference type="GO" id="GO:0008285">
    <property type="term" value="P:negative regulation of cell population proliferation"/>
    <property type="evidence" value="ECO:0000315"/>
    <property type="project" value="FlyBase"/>
</dbReference>
<dbReference type="GO" id="GO:0045892">
    <property type="term" value="P:negative regulation of DNA-templated transcription"/>
    <property type="evidence" value="ECO:0000315"/>
    <property type="project" value="FlyBase"/>
</dbReference>
<dbReference type="GO" id="GO:0000122">
    <property type="term" value="P:negative regulation of transcription by RNA polymerase II"/>
    <property type="evidence" value="ECO:0000316"/>
    <property type="project" value="FlyBase"/>
</dbReference>
<dbReference type="GO" id="GO:0045944">
    <property type="term" value="P:positive regulation of transcription by RNA polymerase II"/>
    <property type="evidence" value="ECO:0000318"/>
    <property type="project" value="GO_Central"/>
</dbReference>
<dbReference type="GO" id="GO:0035220">
    <property type="term" value="P:wing disc development"/>
    <property type="evidence" value="ECO:0000315"/>
    <property type="project" value="FlyBase"/>
</dbReference>
<dbReference type="CDD" id="cd22032">
    <property type="entry name" value="HMG-box_SoxF"/>
    <property type="match status" value="1"/>
</dbReference>
<dbReference type="FunFam" id="1.10.30.10:FF:000008">
    <property type="entry name" value="transcription factor SOX-7"/>
    <property type="match status" value="1"/>
</dbReference>
<dbReference type="Gene3D" id="1.10.30.10">
    <property type="entry name" value="High mobility group box domain"/>
    <property type="match status" value="1"/>
</dbReference>
<dbReference type="InterPro" id="IPR009071">
    <property type="entry name" value="HMG_box_dom"/>
</dbReference>
<dbReference type="InterPro" id="IPR036910">
    <property type="entry name" value="HMG_box_dom_sf"/>
</dbReference>
<dbReference type="InterPro" id="IPR050140">
    <property type="entry name" value="SRY-related_HMG-box_TF-like"/>
</dbReference>
<dbReference type="PANTHER" id="PTHR10270">
    <property type="entry name" value="SOX TRANSCRIPTION FACTOR"/>
    <property type="match status" value="1"/>
</dbReference>
<dbReference type="PANTHER" id="PTHR10270:SF317">
    <property type="entry name" value="TRANSCRIPTION FACTOR SOX-15-RELATED"/>
    <property type="match status" value="1"/>
</dbReference>
<dbReference type="Pfam" id="PF00505">
    <property type="entry name" value="HMG_box"/>
    <property type="match status" value="1"/>
</dbReference>
<dbReference type="SMART" id="SM00398">
    <property type="entry name" value="HMG"/>
    <property type="match status" value="1"/>
</dbReference>
<dbReference type="SUPFAM" id="SSF47095">
    <property type="entry name" value="HMG-box"/>
    <property type="match status" value="1"/>
</dbReference>
<dbReference type="PROSITE" id="PS50118">
    <property type="entry name" value="HMG_BOX_2"/>
    <property type="match status" value="1"/>
</dbReference>
<comment type="subcellular location">
    <subcellularLocation>
        <location evidence="1">Nucleus</location>
    </subcellularLocation>
</comment>
<comment type="sequence caution" evidence="3">
    <conflict type="frameshift">
        <sequence resource="EMBL-CDS" id="CAB63944"/>
    </conflict>
</comment>
<reference key="1">
    <citation type="submission" date="1999-11" db="EMBL/GenBank/DDBJ databases">
        <title>Sox50E, a Drosophila Sox domain gene expressed in the proximal region of the wing imaginal disc.</title>
        <authorList>
            <person name="Loh S.H.Y."/>
            <person name="Whitworth A."/>
            <person name="Russell S."/>
        </authorList>
    </citation>
    <scope>NUCLEOTIDE SEQUENCE [MRNA]</scope>
    <source>
        <strain>Canton-S</strain>
        <tissue>Larva</tissue>
    </source>
</reference>
<reference key="2">
    <citation type="journal article" date="2000" name="Science">
        <title>The genome sequence of Drosophila melanogaster.</title>
        <authorList>
            <person name="Adams M.D."/>
            <person name="Celniker S.E."/>
            <person name="Holt R.A."/>
            <person name="Evans C.A."/>
            <person name="Gocayne J.D."/>
            <person name="Amanatides P.G."/>
            <person name="Scherer S.E."/>
            <person name="Li P.W."/>
            <person name="Hoskins R.A."/>
            <person name="Galle R.F."/>
            <person name="George R.A."/>
            <person name="Lewis S.E."/>
            <person name="Richards S."/>
            <person name="Ashburner M."/>
            <person name="Henderson S.N."/>
            <person name="Sutton G.G."/>
            <person name="Wortman J.R."/>
            <person name="Yandell M.D."/>
            <person name="Zhang Q."/>
            <person name="Chen L.X."/>
            <person name="Brandon R.C."/>
            <person name="Rogers Y.-H.C."/>
            <person name="Blazej R.G."/>
            <person name="Champe M."/>
            <person name="Pfeiffer B.D."/>
            <person name="Wan K.H."/>
            <person name="Doyle C."/>
            <person name="Baxter E.G."/>
            <person name="Helt G."/>
            <person name="Nelson C.R."/>
            <person name="Miklos G.L.G."/>
            <person name="Abril J.F."/>
            <person name="Agbayani A."/>
            <person name="An H.-J."/>
            <person name="Andrews-Pfannkoch C."/>
            <person name="Baldwin D."/>
            <person name="Ballew R.M."/>
            <person name="Basu A."/>
            <person name="Baxendale J."/>
            <person name="Bayraktaroglu L."/>
            <person name="Beasley E.M."/>
            <person name="Beeson K.Y."/>
            <person name="Benos P.V."/>
            <person name="Berman B.P."/>
            <person name="Bhandari D."/>
            <person name="Bolshakov S."/>
            <person name="Borkova D."/>
            <person name="Botchan M.R."/>
            <person name="Bouck J."/>
            <person name="Brokstein P."/>
            <person name="Brottier P."/>
            <person name="Burtis K.C."/>
            <person name="Busam D.A."/>
            <person name="Butler H."/>
            <person name="Cadieu E."/>
            <person name="Center A."/>
            <person name="Chandra I."/>
            <person name="Cherry J.M."/>
            <person name="Cawley S."/>
            <person name="Dahlke C."/>
            <person name="Davenport L.B."/>
            <person name="Davies P."/>
            <person name="de Pablos B."/>
            <person name="Delcher A."/>
            <person name="Deng Z."/>
            <person name="Mays A.D."/>
            <person name="Dew I."/>
            <person name="Dietz S.M."/>
            <person name="Dodson K."/>
            <person name="Doup L.E."/>
            <person name="Downes M."/>
            <person name="Dugan-Rocha S."/>
            <person name="Dunkov B.C."/>
            <person name="Dunn P."/>
            <person name="Durbin K.J."/>
            <person name="Evangelista C.C."/>
            <person name="Ferraz C."/>
            <person name="Ferriera S."/>
            <person name="Fleischmann W."/>
            <person name="Fosler C."/>
            <person name="Gabrielian A.E."/>
            <person name="Garg N.S."/>
            <person name="Gelbart W.M."/>
            <person name="Glasser K."/>
            <person name="Glodek A."/>
            <person name="Gong F."/>
            <person name="Gorrell J.H."/>
            <person name="Gu Z."/>
            <person name="Guan P."/>
            <person name="Harris M."/>
            <person name="Harris N.L."/>
            <person name="Harvey D.A."/>
            <person name="Heiman T.J."/>
            <person name="Hernandez J.R."/>
            <person name="Houck J."/>
            <person name="Hostin D."/>
            <person name="Houston K.A."/>
            <person name="Howland T.J."/>
            <person name="Wei M.-H."/>
            <person name="Ibegwam C."/>
            <person name="Jalali M."/>
            <person name="Kalush F."/>
            <person name="Karpen G.H."/>
            <person name="Ke Z."/>
            <person name="Kennison J.A."/>
            <person name="Ketchum K.A."/>
            <person name="Kimmel B.E."/>
            <person name="Kodira C.D."/>
            <person name="Kraft C.L."/>
            <person name="Kravitz S."/>
            <person name="Kulp D."/>
            <person name="Lai Z."/>
            <person name="Lasko P."/>
            <person name="Lei Y."/>
            <person name="Levitsky A.A."/>
            <person name="Li J.H."/>
            <person name="Li Z."/>
            <person name="Liang Y."/>
            <person name="Lin X."/>
            <person name="Liu X."/>
            <person name="Mattei B."/>
            <person name="McIntosh T.C."/>
            <person name="McLeod M.P."/>
            <person name="McPherson D."/>
            <person name="Merkulov G."/>
            <person name="Milshina N.V."/>
            <person name="Mobarry C."/>
            <person name="Morris J."/>
            <person name="Moshrefi A."/>
            <person name="Mount S.M."/>
            <person name="Moy M."/>
            <person name="Murphy B."/>
            <person name="Murphy L."/>
            <person name="Muzny D.M."/>
            <person name="Nelson D.L."/>
            <person name="Nelson D.R."/>
            <person name="Nelson K.A."/>
            <person name="Nixon K."/>
            <person name="Nusskern D.R."/>
            <person name="Pacleb J.M."/>
            <person name="Palazzolo M."/>
            <person name="Pittman G.S."/>
            <person name="Pan S."/>
            <person name="Pollard J."/>
            <person name="Puri V."/>
            <person name="Reese M.G."/>
            <person name="Reinert K."/>
            <person name="Remington K."/>
            <person name="Saunders R.D.C."/>
            <person name="Scheeler F."/>
            <person name="Shen H."/>
            <person name="Shue B.C."/>
            <person name="Siden-Kiamos I."/>
            <person name="Simpson M."/>
            <person name="Skupski M.P."/>
            <person name="Smith T.J."/>
            <person name="Spier E."/>
            <person name="Spradling A.C."/>
            <person name="Stapleton M."/>
            <person name="Strong R."/>
            <person name="Sun E."/>
            <person name="Svirskas R."/>
            <person name="Tector C."/>
            <person name="Turner R."/>
            <person name="Venter E."/>
            <person name="Wang A.H."/>
            <person name="Wang X."/>
            <person name="Wang Z.-Y."/>
            <person name="Wassarman D.A."/>
            <person name="Weinstock G.M."/>
            <person name="Weissenbach J."/>
            <person name="Williams S.M."/>
            <person name="Woodage T."/>
            <person name="Worley K.C."/>
            <person name="Wu D."/>
            <person name="Yang S."/>
            <person name="Yao Q.A."/>
            <person name="Ye J."/>
            <person name="Yeh R.-F."/>
            <person name="Zaveri J.S."/>
            <person name="Zhan M."/>
            <person name="Zhang G."/>
            <person name="Zhao Q."/>
            <person name="Zheng L."/>
            <person name="Zheng X.H."/>
            <person name="Zhong F.N."/>
            <person name="Zhong W."/>
            <person name="Zhou X."/>
            <person name="Zhu S.C."/>
            <person name="Zhu X."/>
            <person name="Smith H.O."/>
            <person name="Gibbs R.A."/>
            <person name="Myers E.W."/>
            <person name="Rubin G.M."/>
            <person name="Venter J.C."/>
        </authorList>
    </citation>
    <scope>NUCLEOTIDE SEQUENCE [LARGE SCALE GENOMIC DNA]</scope>
    <source>
        <strain>Berkeley</strain>
    </source>
</reference>
<reference key="3">
    <citation type="journal article" date="2002" name="Genome Biol.">
        <title>Annotation of the Drosophila melanogaster euchromatic genome: a systematic review.</title>
        <authorList>
            <person name="Misra S."/>
            <person name="Crosby M.A."/>
            <person name="Mungall C.J."/>
            <person name="Matthews B.B."/>
            <person name="Campbell K.S."/>
            <person name="Hradecky P."/>
            <person name="Huang Y."/>
            <person name="Kaminker J.S."/>
            <person name="Millburn G.H."/>
            <person name="Prochnik S.E."/>
            <person name="Smith C.D."/>
            <person name="Tupy J.L."/>
            <person name="Whitfield E.J."/>
            <person name="Bayraktaroglu L."/>
            <person name="Berman B.P."/>
            <person name="Bettencourt B.R."/>
            <person name="Celniker S.E."/>
            <person name="de Grey A.D.N.J."/>
            <person name="Drysdale R.A."/>
            <person name="Harris N.L."/>
            <person name="Richter J."/>
            <person name="Russo S."/>
            <person name="Schroeder A.J."/>
            <person name="Shu S.Q."/>
            <person name="Stapleton M."/>
            <person name="Yamada C."/>
            <person name="Ashburner M."/>
            <person name="Gelbart W.M."/>
            <person name="Rubin G.M."/>
            <person name="Lewis S.E."/>
        </authorList>
    </citation>
    <scope>GENOME REANNOTATION</scope>
    <source>
        <strain>Berkeley</strain>
    </source>
</reference>
<reference key="4">
    <citation type="submission" date="2006-10" db="EMBL/GenBank/DDBJ databases">
        <authorList>
            <person name="Stapleton M."/>
            <person name="Carlson J.W."/>
            <person name="Chavez C."/>
            <person name="Frise E."/>
            <person name="George R.A."/>
            <person name="Kapadia B."/>
            <person name="Pacleb J.M."/>
            <person name="Park S."/>
            <person name="Wan K.H."/>
            <person name="Yu C."/>
            <person name="Celniker S.E."/>
        </authorList>
    </citation>
    <scope>NUCLEOTIDE SEQUENCE [LARGE SCALE MRNA]</scope>
    <source>
        <strain>Berkeley</strain>
    </source>
</reference>
<reference key="5">
    <citation type="journal article" date="1992" name="Nucleic Acids Res.">
        <title>A conserved family of genes related to the testis determining gene, SRY.</title>
        <authorList>
            <person name="Denny P."/>
            <person name="Swift S."/>
            <person name="Brand N."/>
            <person name="Dabhade N."/>
            <person name="Barton P."/>
            <person name="Ashworth A."/>
        </authorList>
    </citation>
    <scope>NUCLEOTIDE SEQUENCE [MRNA] OF 226-279</scope>
    <source>
        <strain>Canton-S</strain>
    </source>
</reference>
<evidence type="ECO:0000255" key="1">
    <source>
        <dbReference type="PROSITE-ProRule" id="PRU00267"/>
    </source>
</evidence>
<evidence type="ECO:0000256" key="2">
    <source>
        <dbReference type="SAM" id="MobiDB-lite"/>
    </source>
</evidence>
<evidence type="ECO:0000305" key="3"/>
<protein>
    <recommendedName>
        <fullName>Putative transcription factor SOX-15</fullName>
    </recommendedName>
    <alternativeName>
        <fullName>Sox50E</fullName>
    </alternativeName>
</protein>
<proteinExistence type="evidence at transcript level"/>
<sequence length="784" mass="84872">MEPSYDHEHPHHLLTNYNSKKYPHVSRTPEYSHSTGSDYPEHGGYLTDGRLMHESNSDAGIYHVRQGSEHSSPSLHSPAIQSSGYENEHLNEAVLAAHSHSHSPMPMVSSAYVGGGTASGSLINSNIPLLGGGGNSVLNKFLSHPHAGMVGGGTGQMEDCTSHSPIEAASMWSYDYKGDLCAPNCGYLERHKPLPADLKYRPGGTQSKSAKESRIRRPMNAFMVWAKIERKKLADENPDLHNADLSKMLGKKWRSLTPQDRRPYVEEAERLRVIHMTEHPNYKYRPRRRKQSKLRAMQPGGKEQSESSPNPGTGGSKSNPKLATPPLATASSSYTTPTDESTCNSTNQNHGQSTPGGLYEQPLKPTYSPSSVDCYSNADSTEQIESLAANCPPALLNESSPTGGGYDNSLLLKKLTKPSPSRAAKSRQEKLAKSEEKNKGSQSQGQSQQGIYAATYPLAPTSVAVVAARGMYVTCNNRGLLDHGHSVKGTFYPPVSVSEDDNSTSMRNSISALQQHCNVVTSTPSSSGGTMPTSEMSSYTVSMADNCGNLRLSMNELSGNEYLPSANAYGMQYEDFLRYQSNDMDYSTSAVEHKETTSDSASGQKCLKYPDTNQNYDDYEAEAYSNAMLPATAASYYTQLPYPPTSLAAFPLQLAVPFQQTTSGAYGAQPIQSGYLHYGNYGGYEGMAQSQPQNQAPVHHQQASHSAPPSLSVPPNQTVTSNSAAISMQQHHHHHFGPAPGMVGVGVGVGVGVGVGEMLFEQQQRKDDEISNILAGVRKTCYSN</sequence>
<name>SOX15_DROME</name>
<keyword id="KW-0238">DNA-binding</keyword>
<keyword id="KW-0539">Nucleus</keyword>
<keyword id="KW-1185">Reference proteome</keyword>
<keyword id="KW-0804">Transcription</keyword>
<keyword id="KW-0805">Transcription regulation</keyword>